<name>RUVC_ENT38</name>
<accession>A4WBM0</accession>
<keyword id="KW-0963">Cytoplasm</keyword>
<keyword id="KW-0227">DNA damage</keyword>
<keyword id="KW-0233">DNA recombination</keyword>
<keyword id="KW-0234">DNA repair</keyword>
<keyword id="KW-0238">DNA-binding</keyword>
<keyword id="KW-0255">Endonuclease</keyword>
<keyword id="KW-0378">Hydrolase</keyword>
<keyword id="KW-0460">Magnesium</keyword>
<keyword id="KW-0479">Metal-binding</keyword>
<keyword id="KW-0540">Nuclease</keyword>
<proteinExistence type="inferred from homology"/>
<reference key="1">
    <citation type="journal article" date="2010" name="PLoS Genet.">
        <title>Genome sequence of the plant growth promoting endophytic bacterium Enterobacter sp. 638.</title>
        <authorList>
            <person name="Taghavi S."/>
            <person name="van der Lelie D."/>
            <person name="Hoffman A."/>
            <person name="Zhang Y.B."/>
            <person name="Walla M.D."/>
            <person name="Vangronsveld J."/>
            <person name="Newman L."/>
            <person name="Monchy S."/>
        </authorList>
    </citation>
    <scope>NUCLEOTIDE SEQUENCE [LARGE SCALE GENOMIC DNA]</scope>
    <source>
        <strain>638</strain>
    </source>
</reference>
<feature type="chain" id="PRO_1000057266" description="Crossover junction endodeoxyribonuclease RuvC">
    <location>
        <begin position="1"/>
        <end position="173"/>
    </location>
</feature>
<feature type="active site" evidence="1">
    <location>
        <position position="8"/>
    </location>
</feature>
<feature type="active site" evidence="1">
    <location>
        <position position="67"/>
    </location>
</feature>
<feature type="active site" evidence="1">
    <location>
        <position position="139"/>
    </location>
</feature>
<feature type="binding site" evidence="1">
    <location>
        <position position="8"/>
    </location>
    <ligand>
        <name>Mg(2+)</name>
        <dbReference type="ChEBI" id="CHEBI:18420"/>
        <label>1</label>
    </ligand>
</feature>
<feature type="binding site" evidence="1">
    <location>
        <position position="67"/>
    </location>
    <ligand>
        <name>Mg(2+)</name>
        <dbReference type="ChEBI" id="CHEBI:18420"/>
        <label>2</label>
    </ligand>
</feature>
<feature type="binding site" evidence="1">
    <location>
        <position position="139"/>
    </location>
    <ligand>
        <name>Mg(2+)</name>
        <dbReference type="ChEBI" id="CHEBI:18420"/>
        <label>1</label>
    </ligand>
</feature>
<evidence type="ECO:0000255" key="1">
    <source>
        <dbReference type="HAMAP-Rule" id="MF_00034"/>
    </source>
</evidence>
<dbReference type="EC" id="3.1.21.10" evidence="1"/>
<dbReference type="EMBL" id="CP000653">
    <property type="protein sequence ID" value="ABP61100.1"/>
    <property type="molecule type" value="Genomic_DNA"/>
</dbReference>
<dbReference type="RefSeq" id="WP_015959433.1">
    <property type="nucleotide sequence ID" value="NC_009436.1"/>
</dbReference>
<dbReference type="SMR" id="A4WBM0"/>
<dbReference type="STRING" id="399742.Ent638_2431"/>
<dbReference type="KEGG" id="ent:Ent638_2431"/>
<dbReference type="eggNOG" id="COG0817">
    <property type="taxonomic scope" value="Bacteria"/>
</dbReference>
<dbReference type="HOGENOM" id="CLU_091257_2_1_6"/>
<dbReference type="OrthoDB" id="9805499at2"/>
<dbReference type="Proteomes" id="UP000000230">
    <property type="component" value="Chromosome"/>
</dbReference>
<dbReference type="GO" id="GO:0005737">
    <property type="term" value="C:cytoplasm"/>
    <property type="evidence" value="ECO:0007669"/>
    <property type="project" value="UniProtKB-SubCell"/>
</dbReference>
<dbReference type="GO" id="GO:0048476">
    <property type="term" value="C:Holliday junction resolvase complex"/>
    <property type="evidence" value="ECO:0007669"/>
    <property type="project" value="UniProtKB-UniRule"/>
</dbReference>
<dbReference type="GO" id="GO:0008821">
    <property type="term" value="F:crossover junction DNA endonuclease activity"/>
    <property type="evidence" value="ECO:0007669"/>
    <property type="project" value="UniProtKB-UniRule"/>
</dbReference>
<dbReference type="GO" id="GO:0003677">
    <property type="term" value="F:DNA binding"/>
    <property type="evidence" value="ECO:0007669"/>
    <property type="project" value="UniProtKB-KW"/>
</dbReference>
<dbReference type="GO" id="GO:0000287">
    <property type="term" value="F:magnesium ion binding"/>
    <property type="evidence" value="ECO:0007669"/>
    <property type="project" value="UniProtKB-UniRule"/>
</dbReference>
<dbReference type="GO" id="GO:0006310">
    <property type="term" value="P:DNA recombination"/>
    <property type="evidence" value="ECO:0007669"/>
    <property type="project" value="UniProtKB-UniRule"/>
</dbReference>
<dbReference type="GO" id="GO:0006281">
    <property type="term" value="P:DNA repair"/>
    <property type="evidence" value="ECO:0007669"/>
    <property type="project" value="UniProtKB-UniRule"/>
</dbReference>
<dbReference type="CDD" id="cd16962">
    <property type="entry name" value="RuvC"/>
    <property type="match status" value="1"/>
</dbReference>
<dbReference type="FunFam" id="3.30.420.10:FF:000002">
    <property type="entry name" value="Crossover junction endodeoxyribonuclease RuvC"/>
    <property type="match status" value="1"/>
</dbReference>
<dbReference type="Gene3D" id="3.30.420.10">
    <property type="entry name" value="Ribonuclease H-like superfamily/Ribonuclease H"/>
    <property type="match status" value="1"/>
</dbReference>
<dbReference type="HAMAP" id="MF_00034">
    <property type="entry name" value="RuvC"/>
    <property type="match status" value="1"/>
</dbReference>
<dbReference type="InterPro" id="IPR012337">
    <property type="entry name" value="RNaseH-like_sf"/>
</dbReference>
<dbReference type="InterPro" id="IPR036397">
    <property type="entry name" value="RNaseH_sf"/>
</dbReference>
<dbReference type="InterPro" id="IPR020563">
    <property type="entry name" value="X-over_junc_endoDNase_Mg_BS"/>
</dbReference>
<dbReference type="InterPro" id="IPR002176">
    <property type="entry name" value="X-over_junc_endoDNase_RuvC"/>
</dbReference>
<dbReference type="NCBIfam" id="NF000711">
    <property type="entry name" value="PRK00039.2-1"/>
    <property type="match status" value="1"/>
</dbReference>
<dbReference type="NCBIfam" id="TIGR00228">
    <property type="entry name" value="ruvC"/>
    <property type="match status" value="1"/>
</dbReference>
<dbReference type="PANTHER" id="PTHR30194">
    <property type="entry name" value="CROSSOVER JUNCTION ENDODEOXYRIBONUCLEASE RUVC"/>
    <property type="match status" value="1"/>
</dbReference>
<dbReference type="PANTHER" id="PTHR30194:SF3">
    <property type="entry name" value="CROSSOVER JUNCTION ENDODEOXYRIBONUCLEASE RUVC"/>
    <property type="match status" value="1"/>
</dbReference>
<dbReference type="Pfam" id="PF02075">
    <property type="entry name" value="RuvC"/>
    <property type="match status" value="1"/>
</dbReference>
<dbReference type="PRINTS" id="PR00696">
    <property type="entry name" value="RSOLVASERUVC"/>
</dbReference>
<dbReference type="SUPFAM" id="SSF53098">
    <property type="entry name" value="Ribonuclease H-like"/>
    <property type="match status" value="1"/>
</dbReference>
<dbReference type="PROSITE" id="PS01321">
    <property type="entry name" value="RUVC"/>
    <property type="match status" value="1"/>
</dbReference>
<protein>
    <recommendedName>
        <fullName evidence="1">Crossover junction endodeoxyribonuclease RuvC</fullName>
        <ecNumber evidence="1">3.1.21.10</ecNumber>
    </recommendedName>
    <alternativeName>
        <fullName evidence="1">Holliday junction nuclease RuvC</fullName>
    </alternativeName>
    <alternativeName>
        <fullName evidence="1">Holliday junction resolvase RuvC</fullName>
    </alternativeName>
</protein>
<comment type="function">
    <text evidence="1">The RuvA-RuvB-RuvC complex processes Holliday junction (HJ) DNA during genetic recombination and DNA repair. Endonuclease that resolves HJ intermediates. Cleaves cruciform DNA by making single-stranded nicks across the HJ at symmetrical positions within the homologous arms, yielding a 5'-phosphate and a 3'-hydroxyl group; requires a central core of homology in the junction. The consensus cleavage sequence is 5'-(A/T)TT(C/G)-3'. Cleavage occurs on the 3'-side of the TT dinucleotide at the point of strand exchange. HJ branch migration catalyzed by RuvA-RuvB allows RuvC to scan DNA until it finds its consensus sequence, where it cleaves and resolves the cruciform DNA.</text>
</comment>
<comment type="catalytic activity">
    <reaction evidence="1">
        <text>Endonucleolytic cleavage at a junction such as a reciprocal single-stranded crossover between two homologous DNA duplexes (Holliday junction).</text>
        <dbReference type="EC" id="3.1.21.10"/>
    </reaction>
</comment>
<comment type="cofactor">
    <cofactor evidence="1">
        <name>Mg(2+)</name>
        <dbReference type="ChEBI" id="CHEBI:18420"/>
    </cofactor>
    <text evidence="1">Binds 2 Mg(2+) ion per subunit.</text>
</comment>
<comment type="subunit">
    <text evidence="1">Homodimer which binds Holliday junction (HJ) DNA. The HJ becomes 2-fold symmetrical on binding to RuvC with unstacked arms; it has a different conformation from HJ DNA in complex with RuvA. In the full resolvosome a probable DNA-RuvA(4)-RuvB(12)-RuvC(2) complex forms which resolves the HJ.</text>
</comment>
<comment type="subcellular location">
    <subcellularLocation>
        <location evidence="1">Cytoplasm</location>
    </subcellularLocation>
</comment>
<comment type="similarity">
    <text evidence="1">Belongs to the RuvC family.</text>
</comment>
<sequence length="173" mass="18681">MSIILGIDPGSRITGYGVIRQVGRQLTYLGSGCIRTKVDDLPSRLKLIYAGVSEIITQFQPDFFAIEQVFMAKNADSALKLGQARGVAIVAAVNQDLPVFEYAARQVKQTVVGTGGAAKSQVQHMVRTLLKLQANPQADAADALAIAITHCHVTQNSMQMSESRLSLARGRLR</sequence>
<organism>
    <name type="scientific">Enterobacter sp. (strain 638)</name>
    <dbReference type="NCBI Taxonomy" id="399742"/>
    <lineage>
        <taxon>Bacteria</taxon>
        <taxon>Pseudomonadati</taxon>
        <taxon>Pseudomonadota</taxon>
        <taxon>Gammaproteobacteria</taxon>
        <taxon>Enterobacterales</taxon>
        <taxon>Enterobacteriaceae</taxon>
        <taxon>Enterobacter</taxon>
    </lineage>
</organism>
<gene>
    <name evidence="1" type="primary">ruvC</name>
    <name type="ordered locus">Ent638_2431</name>
</gene>